<name>RL1_THET2</name>
<protein>
    <recommendedName>
        <fullName evidence="2">Large ribosomal subunit protein uL1</fullName>
    </recommendedName>
    <alternativeName>
        <fullName evidence="3">50S ribosomal protein L1</fullName>
    </alternativeName>
</protein>
<gene>
    <name evidence="2" type="primary">rplA</name>
    <name type="ordered locus">TT_C1739</name>
</gene>
<organism>
    <name type="scientific">Thermus thermophilus (strain ATCC BAA-163 / DSM 7039 / HB27)</name>
    <dbReference type="NCBI Taxonomy" id="262724"/>
    <lineage>
        <taxon>Bacteria</taxon>
        <taxon>Thermotogati</taxon>
        <taxon>Deinococcota</taxon>
        <taxon>Deinococci</taxon>
        <taxon>Thermales</taxon>
        <taxon>Thermaceae</taxon>
        <taxon>Thermus</taxon>
    </lineage>
</organism>
<dbReference type="EMBL" id="AE017221">
    <property type="protein sequence ID" value="AAS82081.1"/>
    <property type="molecule type" value="Genomic_DNA"/>
</dbReference>
<dbReference type="RefSeq" id="WP_011174098.1">
    <property type="nucleotide sequence ID" value="NC_005835.1"/>
</dbReference>
<dbReference type="PDB" id="4V4I">
    <property type="method" value="X-ray"/>
    <property type="resolution" value="3.71 A"/>
    <property type="chains" value="A=1-229"/>
</dbReference>
<dbReference type="PDB" id="4V4J">
    <property type="method" value="X-ray"/>
    <property type="resolution" value="3.83 A"/>
    <property type="chains" value="A=1-229"/>
</dbReference>
<dbReference type="PDB" id="4V8Y">
    <property type="method" value="EM"/>
    <property type="resolution" value="4.30 A"/>
    <property type="chains" value="L/y=1-229"/>
</dbReference>
<dbReference type="PDB" id="4V9J">
    <property type="method" value="X-ray"/>
    <property type="resolution" value="3.86 A"/>
    <property type="chains" value="BC/DC=2-229"/>
</dbReference>
<dbReference type="PDB" id="4V9K">
    <property type="method" value="X-ray"/>
    <property type="resolution" value="3.50 A"/>
    <property type="chains" value="BC/DC=2-229"/>
</dbReference>
<dbReference type="PDB" id="4V9L">
    <property type="method" value="X-ray"/>
    <property type="resolution" value="3.50 A"/>
    <property type="chains" value="BC/DC=2-229"/>
</dbReference>
<dbReference type="PDB" id="4V9M">
    <property type="method" value="X-ray"/>
    <property type="resolution" value="4.00 A"/>
    <property type="chains" value="BC/DC=2-229"/>
</dbReference>
<dbReference type="PDB" id="4W29">
    <property type="method" value="X-ray"/>
    <property type="resolution" value="3.80 A"/>
    <property type="chains" value="BC/DC=2-229"/>
</dbReference>
<dbReference type="PDB" id="6N1D">
    <property type="method" value="X-ray"/>
    <property type="resolution" value="3.20 A"/>
    <property type="chains" value="AL01/BL01=2-229"/>
</dbReference>
<dbReference type="PDBsum" id="4V4I"/>
<dbReference type="PDBsum" id="4V4J"/>
<dbReference type="PDBsum" id="4V8Y"/>
<dbReference type="PDBsum" id="4V9J"/>
<dbReference type="PDBsum" id="4V9K"/>
<dbReference type="PDBsum" id="4V9L"/>
<dbReference type="PDBsum" id="4V9M"/>
<dbReference type="PDBsum" id="4W29"/>
<dbReference type="PDBsum" id="6N1D"/>
<dbReference type="EMDB" id="EMD-11641"/>
<dbReference type="EMDB" id="EMD-11642"/>
<dbReference type="SMR" id="Q72GV9"/>
<dbReference type="IntAct" id="Q72GV9">
    <property type="interactions" value="1"/>
</dbReference>
<dbReference type="KEGG" id="tth:TT_C1739"/>
<dbReference type="eggNOG" id="COG0081">
    <property type="taxonomic scope" value="Bacteria"/>
</dbReference>
<dbReference type="HOGENOM" id="CLU_062853_0_0_0"/>
<dbReference type="OrthoDB" id="9803740at2"/>
<dbReference type="Proteomes" id="UP000000592">
    <property type="component" value="Chromosome"/>
</dbReference>
<dbReference type="GO" id="GO:0015934">
    <property type="term" value="C:large ribosomal subunit"/>
    <property type="evidence" value="ECO:0007669"/>
    <property type="project" value="InterPro"/>
</dbReference>
<dbReference type="GO" id="GO:0019843">
    <property type="term" value="F:rRNA binding"/>
    <property type="evidence" value="ECO:0007669"/>
    <property type="project" value="UniProtKB-UniRule"/>
</dbReference>
<dbReference type="GO" id="GO:0003735">
    <property type="term" value="F:structural constituent of ribosome"/>
    <property type="evidence" value="ECO:0007669"/>
    <property type="project" value="InterPro"/>
</dbReference>
<dbReference type="GO" id="GO:0000049">
    <property type="term" value="F:tRNA binding"/>
    <property type="evidence" value="ECO:0007669"/>
    <property type="project" value="UniProtKB-KW"/>
</dbReference>
<dbReference type="GO" id="GO:0006417">
    <property type="term" value="P:regulation of translation"/>
    <property type="evidence" value="ECO:0007669"/>
    <property type="project" value="UniProtKB-KW"/>
</dbReference>
<dbReference type="GO" id="GO:0006412">
    <property type="term" value="P:translation"/>
    <property type="evidence" value="ECO:0007669"/>
    <property type="project" value="UniProtKB-UniRule"/>
</dbReference>
<dbReference type="CDD" id="cd00403">
    <property type="entry name" value="Ribosomal_L1"/>
    <property type="match status" value="1"/>
</dbReference>
<dbReference type="FunFam" id="3.40.50.790:FF:000001">
    <property type="entry name" value="50S ribosomal protein L1"/>
    <property type="match status" value="1"/>
</dbReference>
<dbReference type="Gene3D" id="3.30.190.20">
    <property type="match status" value="1"/>
</dbReference>
<dbReference type="Gene3D" id="3.40.50.790">
    <property type="match status" value="1"/>
</dbReference>
<dbReference type="HAMAP" id="MF_01318_B">
    <property type="entry name" value="Ribosomal_uL1_B"/>
    <property type="match status" value="1"/>
</dbReference>
<dbReference type="InterPro" id="IPR005878">
    <property type="entry name" value="Ribosom_uL1_bac-type"/>
</dbReference>
<dbReference type="InterPro" id="IPR002143">
    <property type="entry name" value="Ribosomal_uL1"/>
</dbReference>
<dbReference type="InterPro" id="IPR023674">
    <property type="entry name" value="Ribosomal_uL1-like"/>
</dbReference>
<dbReference type="InterPro" id="IPR028364">
    <property type="entry name" value="Ribosomal_uL1/biogenesis"/>
</dbReference>
<dbReference type="InterPro" id="IPR016095">
    <property type="entry name" value="Ribosomal_uL1_3-a/b-sand"/>
</dbReference>
<dbReference type="InterPro" id="IPR023673">
    <property type="entry name" value="Ribosomal_uL1_CS"/>
</dbReference>
<dbReference type="NCBIfam" id="TIGR01169">
    <property type="entry name" value="rplA_bact"/>
    <property type="match status" value="1"/>
</dbReference>
<dbReference type="PANTHER" id="PTHR36427">
    <property type="entry name" value="54S RIBOSOMAL PROTEIN L1, MITOCHONDRIAL"/>
    <property type="match status" value="1"/>
</dbReference>
<dbReference type="PANTHER" id="PTHR36427:SF3">
    <property type="entry name" value="LARGE RIBOSOMAL SUBUNIT PROTEIN UL1M"/>
    <property type="match status" value="1"/>
</dbReference>
<dbReference type="Pfam" id="PF00687">
    <property type="entry name" value="Ribosomal_L1"/>
    <property type="match status" value="1"/>
</dbReference>
<dbReference type="PIRSF" id="PIRSF002155">
    <property type="entry name" value="Ribosomal_L1"/>
    <property type="match status" value="1"/>
</dbReference>
<dbReference type="SUPFAM" id="SSF56808">
    <property type="entry name" value="Ribosomal protein L1"/>
    <property type="match status" value="1"/>
</dbReference>
<dbReference type="PROSITE" id="PS01199">
    <property type="entry name" value="RIBOSOMAL_L1"/>
    <property type="match status" value="1"/>
</dbReference>
<feature type="initiator methionine" description="Removed" evidence="1">
    <location>
        <position position="1"/>
    </location>
</feature>
<feature type="chain" id="PRO_0000125763" description="Large ribosomal subunit protein uL1">
    <location>
        <begin position="2"/>
        <end position="229"/>
    </location>
</feature>
<feature type="helix" evidence="4">
    <location>
        <begin position="7"/>
        <end position="10"/>
    </location>
</feature>
<feature type="turn" evidence="4">
    <location>
        <begin position="11"/>
        <end position="17"/>
    </location>
</feature>
<feature type="helix" evidence="4">
    <location>
        <begin position="24"/>
        <end position="32"/>
    </location>
</feature>
<feature type="strand" evidence="4">
    <location>
        <begin position="36"/>
        <end position="38"/>
    </location>
</feature>
<feature type="helix" evidence="5">
    <location>
        <begin position="51"/>
        <end position="53"/>
    </location>
</feature>
<feature type="strand" evidence="4">
    <location>
        <begin position="54"/>
        <end position="56"/>
    </location>
</feature>
<feature type="helix" evidence="4">
    <location>
        <begin position="82"/>
        <end position="87"/>
    </location>
</feature>
<feature type="turn" evidence="4">
    <location>
        <begin position="97"/>
        <end position="107"/>
    </location>
</feature>
<feature type="helix" evidence="4">
    <location>
        <begin position="119"/>
        <end position="126"/>
    </location>
</feature>
<feature type="turn" evidence="4">
    <location>
        <begin position="129"/>
        <end position="136"/>
    </location>
</feature>
<feature type="helix" evidence="4">
    <location>
        <begin position="140"/>
        <end position="142"/>
    </location>
</feature>
<feature type="strand" evidence="4">
    <location>
        <begin position="146"/>
        <end position="148"/>
    </location>
</feature>
<feature type="turn" evidence="4">
    <location>
        <begin position="149"/>
        <end position="151"/>
    </location>
</feature>
<feature type="helix" evidence="4">
    <location>
        <begin position="152"/>
        <end position="159"/>
    </location>
</feature>
<feature type="turn" evidence="4">
    <location>
        <begin position="167"/>
        <end position="169"/>
    </location>
</feature>
<feature type="turn" evidence="5">
    <location>
        <begin position="178"/>
        <end position="180"/>
    </location>
</feature>
<feature type="helix" evidence="4">
    <location>
        <begin position="183"/>
        <end position="199"/>
    </location>
</feature>
<feature type="strand" evidence="5">
    <location>
        <begin position="218"/>
        <end position="220"/>
    </location>
</feature>
<feature type="helix" evidence="4">
    <location>
        <begin position="226"/>
        <end position="228"/>
    </location>
</feature>
<evidence type="ECO:0000250" key="1"/>
<evidence type="ECO:0000255" key="2">
    <source>
        <dbReference type="HAMAP-Rule" id="MF_01318"/>
    </source>
</evidence>
<evidence type="ECO:0000305" key="3"/>
<evidence type="ECO:0007829" key="4">
    <source>
        <dbReference type="PDB" id="4V9K"/>
    </source>
</evidence>
<evidence type="ECO:0007829" key="5">
    <source>
        <dbReference type="PDB" id="4V9L"/>
    </source>
</evidence>
<proteinExistence type="evidence at protein level"/>
<keyword id="KW-0002">3D-structure</keyword>
<keyword id="KW-0678">Repressor</keyword>
<keyword id="KW-0687">Ribonucleoprotein</keyword>
<keyword id="KW-0689">Ribosomal protein</keyword>
<keyword id="KW-0694">RNA-binding</keyword>
<keyword id="KW-0699">rRNA-binding</keyword>
<keyword id="KW-0810">Translation regulation</keyword>
<keyword id="KW-0820">tRNA-binding</keyword>
<accession>Q72GV9</accession>
<comment type="function">
    <text evidence="2">Binds directly to 23S rRNA. The L1 stalk is quite mobile in the ribosome, and is involved in E site tRNA release.</text>
</comment>
<comment type="function">
    <text evidence="2">Protein L1 is also a translational repressor protein, it controls the translation of the L11 operon by binding to its mRNA.</text>
</comment>
<comment type="subunit">
    <text evidence="2">Part of the 50S ribosomal subunit.</text>
</comment>
<comment type="similarity">
    <text evidence="2">Belongs to the universal ribosomal protein uL1 family.</text>
</comment>
<reference key="1">
    <citation type="journal article" date="2004" name="Nat. Biotechnol.">
        <title>The genome sequence of the extreme thermophile Thermus thermophilus.</title>
        <authorList>
            <person name="Henne A."/>
            <person name="Brueggemann H."/>
            <person name="Raasch C."/>
            <person name="Wiezer A."/>
            <person name="Hartsch T."/>
            <person name="Liesegang H."/>
            <person name="Johann A."/>
            <person name="Lienard T."/>
            <person name="Gohl O."/>
            <person name="Martinez-Arias R."/>
            <person name="Jacobi C."/>
            <person name="Starkuviene V."/>
            <person name="Schlenczeck S."/>
            <person name="Dencker S."/>
            <person name="Huber R."/>
            <person name="Klenk H.-P."/>
            <person name="Kramer W."/>
            <person name="Merkl R."/>
            <person name="Gottschalk G."/>
            <person name="Fritz H.-J."/>
        </authorList>
    </citation>
    <scope>NUCLEOTIDE SEQUENCE [LARGE SCALE GENOMIC DNA]</scope>
    <source>
        <strain>ATCC BAA-163 / DSM 7039 / HB27</strain>
    </source>
</reference>
<sequence length="229" mass="24826">MPKHGKRYRALLEKVDPNKIYTIDEAAHLVKELATAKFDETVEVHAKLGIDPRRSDQNVRGTVSLPHGLGKQVRVLAIAKGEKIKEAEEAGADYVGGEEIIQKILDGWMDFDAVVATPDVMGAVGSKLGRILGPRGLLPNPKAGTVGFNIGEIIREIKAGRIEFRNDKTGAIHAPVGKASFPPEKLADNIRAFIRALEAHKPEGAKGTFLRSVYVTTTMGPSVRINPHS</sequence>